<feature type="signal peptide" evidence="4">
    <location>
        <begin position="1"/>
        <end position="27"/>
    </location>
</feature>
<feature type="chain" id="PRO_0000035598" description="Exotoxin type C">
    <location>
        <begin position="28"/>
        <end position="235"/>
    </location>
</feature>
<feature type="binding site" evidence="1 8">
    <location>
        <position position="194"/>
    </location>
    <ligand>
        <name>Zn(2+)</name>
        <dbReference type="ChEBI" id="CHEBI:29105"/>
    </ligand>
</feature>
<feature type="binding site" evidence="1 8">
    <location>
        <position position="228"/>
    </location>
    <ligand>
        <name>Zn(2+)</name>
        <dbReference type="ChEBI" id="CHEBI:29105"/>
    </ligand>
</feature>
<feature type="binding site" evidence="1 8">
    <location>
        <position position="230"/>
    </location>
    <ligand>
        <name>Zn(2+)</name>
        <dbReference type="ChEBI" id="CHEBI:29105"/>
    </ligand>
</feature>
<feature type="helix" evidence="9">
    <location>
        <begin position="33"/>
        <end position="44"/>
    </location>
</feature>
<feature type="strand" evidence="9">
    <location>
        <begin position="49"/>
        <end position="59"/>
    </location>
</feature>
<feature type="strand" evidence="9">
    <location>
        <begin position="61"/>
        <end position="67"/>
    </location>
</feature>
<feature type="helix" evidence="9">
    <location>
        <begin position="69"/>
        <end position="72"/>
    </location>
</feature>
<feature type="strand" evidence="9">
    <location>
        <begin position="77"/>
        <end position="81"/>
    </location>
</feature>
<feature type="helix" evidence="9">
    <location>
        <begin position="84"/>
        <end position="87"/>
    </location>
</feature>
<feature type="strand" evidence="9">
    <location>
        <begin position="95"/>
        <end position="100"/>
    </location>
</feature>
<feature type="strand" evidence="9">
    <location>
        <begin position="110"/>
        <end position="114"/>
    </location>
</feature>
<feature type="strand" evidence="9">
    <location>
        <begin position="117"/>
        <end position="119"/>
    </location>
</feature>
<feature type="strand" evidence="9">
    <location>
        <begin position="131"/>
        <end position="135"/>
    </location>
</feature>
<feature type="strand" evidence="9">
    <location>
        <begin position="152"/>
        <end position="155"/>
    </location>
</feature>
<feature type="helix" evidence="9">
    <location>
        <begin position="156"/>
        <end position="171"/>
    </location>
</feature>
<feature type="strand" evidence="10">
    <location>
        <begin position="173"/>
        <end position="177"/>
    </location>
</feature>
<feature type="strand" evidence="9">
    <location>
        <begin position="182"/>
        <end position="189"/>
    </location>
</feature>
<feature type="strand" evidence="9">
    <location>
        <begin position="194"/>
        <end position="200"/>
    </location>
</feature>
<feature type="helix" evidence="9">
    <location>
        <begin position="208"/>
        <end position="212"/>
    </location>
</feature>
<feature type="helix" evidence="9">
    <location>
        <begin position="213"/>
        <end position="217"/>
    </location>
</feature>
<feature type="strand" evidence="9">
    <location>
        <begin position="220"/>
        <end position="222"/>
    </location>
</feature>
<feature type="helix" evidence="9">
    <location>
        <begin position="223"/>
        <end position="225"/>
    </location>
</feature>
<feature type="strand" evidence="9">
    <location>
        <begin position="226"/>
        <end position="234"/>
    </location>
</feature>
<sequence>MKKINIIKIVFIITVILISTISPIIKSDSKKDISNVKSDLLYAYTITPYDYKDCRVNFSTTHTLNIDTQKYRGKDYYISSEMSYEASQKFKRDDHVDVFGLFYILNSHTGEYIYGGITPAQNNKVNHKLLGNLFISGESQQNLNNKIILEKDIVTFQEIDFKIRKYLMDNYKIYDATSPYVSGRIEIGTKDGKHEQIDLFDSPNEGTRSDIFAKYKDNRIINMKNFSHFDIYLEK</sequence>
<name>SPEC_STRP8</name>
<comment type="function">
    <text evidence="1 2 3 5">Superantigen that acts as a causative agent of the symptoms associated with scarlet fever (PubMed:11163233, PubMed:1500157, PubMed:1987034, PubMed:9253413). Has been associated with streptococcal toxic shock-like disease and may play a role in the early events of rheumatic fever (PubMed:11163233, PubMed:1500157, PubMed:9253413). Superantigens cross-link major histocompatibility complex (MHC) class II and T-cell receptor (TCR) molecules, resulting in an overstimulation of T-cells associated with a massive release of pyrogenic and inflammatory cytokines (PubMed:11163233, PubMed:9253413).</text>
</comment>
<comment type="miscellaneous">
    <text evidence="4">This toxin seems to be coded by a bacteriophage.</text>
</comment>
<comment type="similarity">
    <text evidence="7">Belongs to the staphylococcal/streptococcal toxin family.</text>
</comment>
<keyword id="KW-0002">3D-structure</keyword>
<keyword id="KW-0903">Direct protein sequencing</keyword>
<keyword id="KW-0732">Signal</keyword>
<keyword id="KW-0800">Toxin</keyword>
<keyword id="KW-0843">Virulence</keyword>
<keyword id="KW-0862">Zinc</keyword>
<organism>
    <name type="scientific">Streptococcus pyogenes serotype M18 (strain MGAS8232)</name>
    <dbReference type="NCBI Taxonomy" id="186103"/>
    <lineage>
        <taxon>Bacteria</taxon>
        <taxon>Bacillati</taxon>
        <taxon>Bacillota</taxon>
        <taxon>Bacilli</taxon>
        <taxon>Lactobacillales</taxon>
        <taxon>Streptococcaceae</taxon>
        <taxon>Streptococcus</taxon>
    </lineage>
</organism>
<dbReference type="EMBL" id="M35514">
    <property type="protein sequence ID" value="AAA27017.1"/>
    <property type="status" value="ALT_SEQ"/>
    <property type="molecule type" value="Genomic_DNA"/>
</dbReference>
<dbReference type="EMBL" id="M97156">
    <property type="protein sequence ID" value="AAB59091.1"/>
    <property type="molecule type" value="Genomic_DNA"/>
</dbReference>
<dbReference type="EMBL" id="M97157">
    <property type="protein sequence ID" value="AAB59092.1"/>
    <property type="molecule type" value="Genomic_DNA"/>
</dbReference>
<dbReference type="EMBL" id="AE009949">
    <property type="protein sequence ID" value="AAL97445.1"/>
    <property type="molecule type" value="Genomic_DNA"/>
</dbReference>
<dbReference type="PIR" id="A30509">
    <property type="entry name" value="A30509"/>
</dbReference>
<dbReference type="PIR" id="A44799">
    <property type="entry name" value="A44799"/>
</dbReference>
<dbReference type="RefSeq" id="WP_002985327.1">
    <property type="nucleotide sequence ID" value="NC_003485.1"/>
</dbReference>
<dbReference type="PDB" id="1AN8">
    <property type="method" value="X-ray"/>
    <property type="resolution" value="2.40 A"/>
    <property type="chains" value="A=28-235"/>
</dbReference>
<dbReference type="PDB" id="1HQR">
    <property type="method" value="X-ray"/>
    <property type="resolution" value="3.20 A"/>
    <property type="chains" value="D=28-235"/>
</dbReference>
<dbReference type="PDB" id="1KTK">
    <property type="method" value="X-ray"/>
    <property type="resolution" value="3.00 A"/>
    <property type="chains" value="A/B/C/D=28-235"/>
</dbReference>
<dbReference type="PDBsum" id="1AN8"/>
<dbReference type="PDBsum" id="1HQR"/>
<dbReference type="PDBsum" id="1KTK"/>
<dbReference type="SMR" id="Q8NKX2"/>
<dbReference type="Allergome" id="8279">
    <property type="allergen name" value="Str py SPEC"/>
</dbReference>
<dbReference type="KEGG" id="spm:spyM18_0778"/>
<dbReference type="HOGENOM" id="CLU_093855_1_0_9"/>
<dbReference type="EvolutionaryTrace" id="Q8NKX2"/>
<dbReference type="GO" id="GO:0005576">
    <property type="term" value="C:extracellular region"/>
    <property type="evidence" value="ECO:0007669"/>
    <property type="project" value="InterPro"/>
</dbReference>
<dbReference type="GO" id="GO:0090729">
    <property type="term" value="F:toxin activity"/>
    <property type="evidence" value="ECO:0007669"/>
    <property type="project" value="UniProtKB-KW"/>
</dbReference>
<dbReference type="Gene3D" id="2.40.50.110">
    <property type="match status" value="1"/>
</dbReference>
<dbReference type="Gene3D" id="3.10.20.120">
    <property type="match status" value="1"/>
</dbReference>
<dbReference type="InterPro" id="IPR008992">
    <property type="entry name" value="Enterotoxin"/>
</dbReference>
<dbReference type="InterPro" id="IPR006126">
    <property type="entry name" value="Staph/Strept_toxin_CS"/>
</dbReference>
<dbReference type="InterPro" id="IPR006173">
    <property type="entry name" value="Staph_tox_OB"/>
</dbReference>
<dbReference type="InterPro" id="IPR016091">
    <property type="entry name" value="SuperAg_toxin_C"/>
</dbReference>
<dbReference type="InterPro" id="IPR013307">
    <property type="entry name" value="Superantigen_bac"/>
</dbReference>
<dbReference type="InterPro" id="IPR006123">
    <property type="entry name" value="Toxin_b-grasp_Staph/Strep"/>
</dbReference>
<dbReference type="InterPro" id="IPR006177">
    <property type="entry name" value="Toxin_bac"/>
</dbReference>
<dbReference type="Pfam" id="PF02876">
    <property type="entry name" value="Stap_Strp_tox_C"/>
    <property type="match status" value="1"/>
</dbReference>
<dbReference type="Pfam" id="PF01123">
    <property type="entry name" value="Stap_Strp_toxin"/>
    <property type="match status" value="1"/>
</dbReference>
<dbReference type="PRINTS" id="PR00279">
    <property type="entry name" value="BACTRLTOXIN"/>
</dbReference>
<dbReference type="PRINTS" id="PR01898">
    <property type="entry name" value="SAGSUPRFAMLY"/>
</dbReference>
<dbReference type="SUPFAM" id="SSF50203">
    <property type="entry name" value="Bacterial enterotoxins"/>
    <property type="match status" value="1"/>
</dbReference>
<dbReference type="SUPFAM" id="SSF54334">
    <property type="entry name" value="Superantigen toxins, C-terminal domain"/>
    <property type="match status" value="1"/>
</dbReference>
<dbReference type="PROSITE" id="PS00277">
    <property type="entry name" value="STAPH_STREP_TOXIN_1"/>
    <property type="match status" value="1"/>
</dbReference>
<dbReference type="PROSITE" id="PS00278">
    <property type="entry name" value="STAPH_STREP_TOXIN_2"/>
    <property type="match status" value="1"/>
</dbReference>
<gene>
    <name evidence="6" type="primary">speC</name>
    <name type="ordered locus">spyM18_0778</name>
</gene>
<evidence type="ECO:0000269" key="1">
    <source>
    </source>
</evidence>
<evidence type="ECO:0000269" key="2">
    <source>
    </source>
</evidence>
<evidence type="ECO:0000269" key="3">
    <source>
    </source>
</evidence>
<evidence type="ECO:0000269" key="4">
    <source>
    </source>
</evidence>
<evidence type="ECO:0000269" key="5">
    <source>
    </source>
</evidence>
<evidence type="ECO:0000303" key="6">
    <source>
    </source>
</evidence>
<evidence type="ECO:0000305" key="7"/>
<evidence type="ECO:0007744" key="8">
    <source>
        <dbReference type="PDB" id="1HQR"/>
    </source>
</evidence>
<evidence type="ECO:0007829" key="9">
    <source>
        <dbReference type="PDB" id="1AN8"/>
    </source>
</evidence>
<evidence type="ECO:0007829" key="10">
    <source>
        <dbReference type="PDB" id="1KTK"/>
    </source>
</evidence>
<proteinExistence type="evidence at protein level"/>
<protein>
    <recommendedName>
        <fullName evidence="6">Exotoxin type C</fullName>
    </recommendedName>
    <alternativeName>
        <fullName evidence="6">SPE C</fullName>
    </alternativeName>
</protein>
<reference key="1">
    <citation type="journal article" date="1988" name="Infect. Immun.">
        <title>Nucleotide sequence of streptococcal pyrogenic exotoxin type C.</title>
        <authorList>
            <person name="Goshorn S.C."/>
            <person name="Schlievert P.M."/>
        </authorList>
    </citation>
    <scope>NUCLEOTIDE SEQUENCE [GENOMIC DNA]</scope>
    <scope>PROTEIN SEQUENCE OF 28-52</scope>
    <source>
        <strain>MGAS1585 / Serotype M18</strain>
    </source>
</reference>
<reference key="2">
    <citation type="journal article" date="1992" name="Infect. Immun.">
        <title>Molecular population genetic evidence of horizontal spread of two alleles of the pyrogenic exotoxin C gene (speC) among pathogenic clones of Streptococcus pyogenes.</title>
        <authorList>
            <person name="Kapur V."/>
            <person name="Nelson K."/>
            <person name="Schlievert P.M."/>
            <person name="Selander R.K."/>
            <person name="Musser J.M."/>
        </authorList>
    </citation>
    <scope>SEQUENCE REVISION TO 21-26</scope>
    <scope>FUNCTION</scope>
    <source>
        <strain>MGAS1585 / Serotype M18</strain>
    </source>
</reference>
<reference key="3">
    <citation type="journal article" date="2002" name="Proc. Natl. Acad. Sci. U.S.A.">
        <title>Genome sequence and comparative microarray analysis of serotype M18 group A Streptococcus strains associated with acute rheumatic fever outbreaks.</title>
        <authorList>
            <person name="Smoot J.C."/>
            <person name="Barbian K.D."/>
            <person name="Van Gompel J.J."/>
            <person name="Smoot L.M."/>
            <person name="Chaussee M.S."/>
            <person name="Sylva G.L."/>
            <person name="Sturdevant D.E."/>
            <person name="Ricklefs S.M."/>
            <person name="Porcella S.F."/>
            <person name="Parkins L.D."/>
            <person name="Beres S.B."/>
            <person name="Campbell D.S."/>
            <person name="Smith T.M."/>
            <person name="Zhang Q."/>
            <person name="Kapur V."/>
            <person name="Daly J.A."/>
            <person name="Veasy L.G."/>
            <person name="Musser J.M."/>
        </authorList>
    </citation>
    <scope>NUCLEOTIDE SEQUENCE [LARGE SCALE GENOMIC DNA]</scope>
    <source>
        <strain>MGAS8232</strain>
    </source>
</reference>
<reference key="4">
    <citation type="journal article" date="1991" name="Infect. Immun.">
        <title>Frequency of the erythrogenic toxin B and C genes (speB and speC) among clinical isolates of group A streptococci.</title>
        <authorList>
            <person name="Yu C.E."/>
            <person name="Ferretti J.J."/>
        </authorList>
    </citation>
    <scope>FUNCTION</scope>
</reference>
<reference key="5">
    <citation type="journal article" date="1997" name="Nat. Struct. Biol.">
        <title>Crystal structure of the streptococcal superantigen SPE-C: dimerization and zinc binding suggest a novel mode of interaction with MHC class II molecules.</title>
        <authorList>
            <person name="Roussel A."/>
            <person name="Anderson B.F."/>
            <person name="Baker H.M."/>
            <person name="Fraser J.D."/>
            <person name="Baker E.N."/>
        </authorList>
    </citation>
    <scope>X-RAY CRYSTALLOGRAPHY (2.4 ANGSTROMS) OF 28-235</scope>
    <scope>FUNCTION</scope>
</reference>
<reference key="6">
    <citation type="journal article" date="2001" name="Immunity">
        <title>Crystal structure of a superantigen bound to the high-affinity, zinc-dependent site on MHC class II.</title>
        <authorList>
            <person name="Li Y."/>
            <person name="Li H."/>
            <person name="Dimasi N."/>
            <person name="McCormick J.K."/>
            <person name="Martin R."/>
            <person name="Schuck P."/>
            <person name="Schlievert P.M."/>
            <person name="Mariuzza R.A."/>
        </authorList>
    </citation>
    <scope>X-RAY CRYSTALLOGRAPHY (3.2 ANGSTROMS) OF 28-235 IN COMPLEX WITH ZINC; HLA-DRA/HLA-DRB5 HETERODIMER WITH MPB PEPTIDE</scope>
    <scope>FUNCTION</scope>
</reference>
<accession>Q8NKX2</accession>
<accession>P13380</accession>